<evidence type="ECO:0000250" key="1"/>
<evidence type="ECO:0000269" key="2">
    <source ref="1"/>
</evidence>
<evidence type="ECO:0000303" key="3">
    <source ref="1"/>
</evidence>
<evidence type="ECO:0000305" key="4"/>
<organism>
    <name type="scientific">Citrus limon</name>
    <name type="common">Lemon</name>
    <name type="synonym">Citrus medica var. limon</name>
    <dbReference type="NCBI Taxonomy" id="2708"/>
    <lineage>
        <taxon>Eukaryota</taxon>
        <taxon>Viridiplantae</taxon>
        <taxon>Streptophyta</taxon>
        <taxon>Embryophyta</taxon>
        <taxon>Tracheophyta</taxon>
        <taxon>Spermatophyta</taxon>
        <taxon>Magnoliopsida</taxon>
        <taxon>eudicotyledons</taxon>
        <taxon>Gunneridae</taxon>
        <taxon>Pentapetalae</taxon>
        <taxon>rosids</taxon>
        <taxon>malvids</taxon>
        <taxon>Sapindales</taxon>
        <taxon>Rutaceae</taxon>
        <taxon>Aurantioideae</taxon>
        <taxon>Citrus</taxon>
    </lineage>
</organism>
<dbReference type="Allergome" id="1642">
    <property type="allergen name" value="Cit l 3"/>
</dbReference>
<dbReference type="Allergome" id="3198">
    <property type="allergen name" value="Cit l 3.0101"/>
</dbReference>
<dbReference type="GO" id="GO:0008289">
    <property type="term" value="F:lipid binding"/>
    <property type="evidence" value="ECO:0007669"/>
    <property type="project" value="UniProtKB-KW"/>
</dbReference>
<feature type="chain" id="PRO_0000153870" description="Non-specific lipid-transfer protein">
    <location>
        <begin position="1"/>
        <end position="20" status="greater than"/>
    </location>
</feature>
<feature type="non-terminal residue" evidence="3">
    <location>
        <position position="20"/>
    </location>
</feature>
<accession>P84160</accession>
<name>NLTP_CITLI</name>
<proteinExistence type="evidence at protein level"/>
<reference evidence="4" key="1">
    <citation type="submission" date="2004-08" db="UniProtKB">
        <title>Purification, characterization and molecular cloning of lipid transfer proteins from citrus fruits.</title>
        <authorList>
            <person name="Arhazem O."/>
            <person name="Lopez-Torrejon G."/>
            <person name="Ibanez M.D."/>
            <person name="Lombardero M."/>
            <person name="Sanchez-Monge R."/>
            <person name="Sastre J."/>
            <person name="Barber D."/>
            <person name="Salcedo G."/>
        </authorList>
    </citation>
    <scope>PROTEIN SEQUENCE</scope>
    <scope>MASS SPECTROMETRY</scope>
    <scope>ALLERGEN</scope>
</reference>
<comment type="function">
    <text evidence="1">Plant non-specific lipid-transfer proteins transfer phospholipids as well as galactolipids across membranes. May play a role in wax or cutin deposition in the cell walls of expanding epidermal cells and certain secretory tissues (By similarity).</text>
</comment>
<comment type="mass spectrometry" mass="9648.0" method="MALDI" evidence="2"/>
<comment type="allergen">
    <text evidence="2">Causes an allergic reaction in human. Binds to IgE.</text>
</comment>
<comment type="similarity">
    <text evidence="4">Belongs to the plant LTP family.</text>
</comment>
<sequence length="20" mass="2043">ITCGQVTGSLAPXIPFLRTG</sequence>
<protein>
    <recommendedName>
        <fullName>Non-specific lipid-transfer protein</fullName>
        <shortName>LTP</shortName>
    </recommendedName>
    <allergenName>Cit l 3</allergenName>
</protein>
<keyword id="KW-0020">Allergen</keyword>
<keyword id="KW-0903">Direct protein sequencing</keyword>
<keyword id="KW-0446">Lipid-binding</keyword>
<keyword id="KW-0813">Transport</keyword>